<dbReference type="EC" id="3.6.5.2" evidence="3"/>
<dbReference type="EMBL" id="AY062237">
    <property type="protein sequence ID" value="AAL38663.1"/>
    <property type="molecule type" value="mRNA"/>
</dbReference>
<dbReference type="EMBL" id="AF448443">
    <property type="protein sequence ID" value="AAM12528.1"/>
    <property type="molecule type" value="Genomic_DNA"/>
</dbReference>
<dbReference type="EMBL" id="AF448441">
    <property type="protein sequence ID" value="AAM12528.1"/>
    <property type="status" value="JOINED"/>
    <property type="molecule type" value="Genomic_DNA"/>
</dbReference>
<dbReference type="EMBL" id="AF448442">
    <property type="protein sequence ID" value="AAM12528.1"/>
    <property type="status" value="JOINED"/>
    <property type="molecule type" value="Genomic_DNA"/>
</dbReference>
<dbReference type="EMBL" id="AK009296">
    <property type="protein sequence ID" value="BAB26198.1"/>
    <property type="molecule type" value="mRNA"/>
</dbReference>
<dbReference type="EMBL" id="AK044783">
    <property type="protein sequence ID" value="BAC32089.1"/>
    <property type="molecule type" value="mRNA"/>
</dbReference>
<dbReference type="EMBL" id="AK054253">
    <property type="protein sequence ID" value="BAC35704.1"/>
    <property type="molecule type" value="mRNA"/>
</dbReference>
<dbReference type="CCDS" id="CCDS21439.1"/>
<dbReference type="RefSeq" id="NP_082514.4">
    <property type="nucleotide sequence ID" value="NM_028238.7"/>
</dbReference>
<dbReference type="SMR" id="Q8QZZ8"/>
<dbReference type="BioGRID" id="215371">
    <property type="interactions" value="8"/>
</dbReference>
<dbReference type="DIP" id="DIP-46949N"/>
<dbReference type="FunCoup" id="Q8QZZ8">
    <property type="interactions" value="686"/>
</dbReference>
<dbReference type="IntAct" id="Q8QZZ8">
    <property type="interactions" value="64"/>
</dbReference>
<dbReference type="STRING" id="10090.ENSMUSP00000102877"/>
<dbReference type="iPTMnet" id="Q8QZZ8"/>
<dbReference type="PhosphoSitePlus" id="Q8QZZ8"/>
<dbReference type="jPOST" id="Q8QZZ8"/>
<dbReference type="PaxDb" id="10090-ENSMUSP00000102877"/>
<dbReference type="ProteomicsDB" id="253146"/>
<dbReference type="ABCD" id="Q8QZZ8">
    <property type="antibodies" value="21 sequenced antibodies"/>
</dbReference>
<dbReference type="Antibodypedia" id="31470">
    <property type="antibodies" value="220 antibodies from 31 providers"/>
</dbReference>
<dbReference type="DNASU" id="72433"/>
<dbReference type="Ensembl" id="ENSMUST00000107256.4">
    <property type="protein sequence ID" value="ENSMUSP00000102877.3"/>
    <property type="gene ID" value="ENSMUSG00000030559.9"/>
</dbReference>
<dbReference type="GeneID" id="72433"/>
<dbReference type="KEGG" id="mmu:72433"/>
<dbReference type="UCSC" id="uc009ifv.1">
    <property type="organism name" value="mouse"/>
</dbReference>
<dbReference type="AGR" id="MGI:1919683"/>
<dbReference type="CTD" id="23682"/>
<dbReference type="MGI" id="MGI:1919683">
    <property type="gene designation" value="Rab38"/>
</dbReference>
<dbReference type="VEuPathDB" id="HostDB:ENSMUSG00000030559"/>
<dbReference type="eggNOG" id="KOG4423">
    <property type="taxonomic scope" value="Eukaryota"/>
</dbReference>
<dbReference type="GeneTree" id="ENSGT00940000157301"/>
<dbReference type="HOGENOM" id="CLU_041217_10_6_1"/>
<dbReference type="InParanoid" id="Q8QZZ8"/>
<dbReference type="OMA" id="MHYKSTI"/>
<dbReference type="OrthoDB" id="245989at2759"/>
<dbReference type="PhylomeDB" id="Q8QZZ8"/>
<dbReference type="TreeFam" id="TF324491"/>
<dbReference type="Reactome" id="R-MMU-8873719">
    <property type="pathway name" value="RAB geranylgeranylation"/>
</dbReference>
<dbReference type="Reactome" id="R-MMU-8876198">
    <property type="pathway name" value="RAB GEFs exchange GTP for GDP on RABs"/>
</dbReference>
<dbReference type="BioGRID-ORCS" id="72433">
    <property type="hits" value="2 hits in 75 CRISPR screens"/>
</dbReference>
<dbReference type="ChiTaRS" id="Rab38">
    <property type="organism name" value="mouse"/>
</dbReference>
<dbReference type="PRO" id="PR:Q8QZZ8"/>
<dbReference type="Proteomes" id="UP000000589">
    <property type="component" value="Chromosome 7"/>
</dbReference>
<dbReference type="RNAct" id="Q8QZZ8">
    <property type="molecule type" value="protein"/>
</dbReference>
<dbReference type="Bgee" id="ENSMUSG00000030559">
    <property type="expression patterns" value="Expressed in animal zygote and 183 other cell types or tissues"/>
</dbReference>
<dbReference type="ExpressionAtlas" id="Q8QZZ8">
    <property type="expression patterns" value="baseline and differential"/>
</dbReference>
<dbReference type="GO" id="GO:0044297">
    <property type="term" value="C:cell body"/>
    <property type="evidence" value="ECO:0007669"/>
    <property type="project" value="Ensembl"/>
</dbReference>
<dbReference type="GO" id="GO:0005769">
    <property type="term" value="C:early endosome"/>
    <property type="evidence" value="ECO:0007669"/>
    <property type="project" value="Ensembl"/>
</dbReference>
<dbReference type="GO" id="GO:0005764">
    <property type="term" value="C:lysosome"/>
    <property type="evidence" value="ECO:0007669"/>
    <property type="project" value="Ensembl"/>
</dbReference>
<dbReference type="GO" id="GO:0042470">
    <property type="term" value="C:melanosome"/>
    <property type="evidence" value="ECO:0000314"/>
    <property type="project" value="UniProtKB"/>
</dbReference>
<dbReference type="GO" id="GO:0033162">
    <property type="term" value="C:melanosome membrane"/>
    <property type="evidence" value="ECO:0000250"/>
    <property type="project" value="UniProtKB"/>
</dbReference>
<dbReference type="GO" id="GO:0044233">
    <property type="term" value="C:mitochondria-associated endoplasmic reticulum membrane contact site"/>
    <property type="evidence" value="ECO:0007669"/>
    <property type="project" value="Ensembl"/>
</dbReference>
<dbReference type="GO" id="GO:0005739">
    <property type="term" value="C:mitochondrion"/>
    <property type="evidence" value="ECO:0007669"/>
    <property type="project" value="Ensembl"/>
</dbReference>
<dbReference type="GO" id="GO:0048471">
    <property type="term" value="C:perinuclear region of cytoplasm"/>
    <property type="evidence" value="ECO:0007669"/>
    <property type="project" value="Ensembl"/>
</dbReference>
<dbReference type="GO" id="GO:0045335">
    <property type="term" value="C:phagocytic vesicle"/>
    <property type="evidence" value="ECO:0000250"/>
    <property type="project" value="UniProtKB"/>
</dbReference>
<dbReference type="GO" id="GO:0030670">
    <property type="term" value="C:phagocytic vesicle membrane"/>
    <property type="evidence" value="ECO:0007669"/>
    <property type="project" value="UniProtKB-SubCell"/>
</dbReference>
<dbReference type="GO" id="GO:0005886">
    <property type="term" value="C:plasma membrane"/>
    <property type="evidence" value="ECO:0007669"/>
    <property type="project" value="UniProtKB-SubCell"/>
</dbReference>
<dbReference type="GO" id="GO:0005802">
    <property type="term" value="C:trans-Golgi network"/>
    <property type="evidence" value="ECO:0007669"/>
    <property type="project" value="InterPro"/>
</dbReference>
<dbReference type="GO" id="GO:0035650">
    <property type="term" value="F:AP-1 adaptor complex binding"/>
    <property type="evidence" value="ECO:0007669"/>
    <property type="project" value="Ensembl"/>
</dbReference>
<dbReference type="GO" id="GO:0035651">
    <property type="term" value="F:AP-3 adaptor complex binding"/>
    <property type="evidence" value="ECO:0007669"/>
    <property type="project" value="Ensembl"/>
</dbReference>
<dbReference type="GO" id="GO:0036461">
    <property type="term" value="F:BLOC-2 complex binding"/>
    <property type="evidence" value="ECO:0007669"/>
    <property type="project" value="Ensembl"/>
</dbReference>
<dbReference type="GO" id="GO:0005525">
    <property type="term" value="F:GTP binding"/>
    <property type="evidence" value="ECO:0007669"/>
    <property type="project" value="UniProtKB-KW"/>
</dbReference>
<dbReference type="GO" id="GO:0030742">
    <property type="term" value="F:GTP-dependent protein binding"/>
    <property type="evidence" value="ECO:0007669"/>
    <property type="project" value="Ensembl"/>
</dbReference>
<dbReference type="GO" id="GO:0003924">
    <property type="term" value="F:GTPase activity"/>
    <property type="evidence" value="ECO:0007669"/>
    <property type="project" value="InterPro"/>
</dbReference>
<dbReference type="GO" id="GO:0035646">
    <property type="term" value="P:endosome to melanosome transport"/>
    <property type="evidence" value="ECO:0007669"/>
    <property type="project" value="Ensembl"/>
</dbReference>
<dbReference type="GO" id="GO:1903232">
    <property type="term" value="P:melanosome assembly"/>
    <property type="evidence" value="ECO:0000250"/>
    <property type="project" value="UniProtKB"/>
</dbReference>
<dbReference type="GO" id="GO:0007005">
    <property type="term" value="P:mitochondrion organization"/>
    <property type="evidence" value="ECO:0007669"/>
    <property type="project" value="Ensembl"/>
</dbReference>
<dbReference type="GO" id="GO:0090383">
    <property type="term" value="P:phagosome acidification"/>
    <property type="evidence" value="ECO:0000250"/>
    <property type="project" value="UniProtKB"/>
</dbReference>
<dbReference type="GO" id="GO:0060155">
    <property type="term" value="P:platelet dense granule organization"/>
    <property type="evidence" value="ECO:0007669"/>
    <property type="project" value="Ensembl"/>
</dbReference>
<dbReference type="GO" id="GO:0048023">
    <property type="term" value="P:positive regulation of melanin biosynthetic process"/>
    <property type="evidence" value="ECO:0007669"/>
    <property type="project" value="Ensembl"/>
</dbReference>
<dbReference type="GO" id="GO:2001247">
    <property type="term" value="P:positive regulation of phosphatidylcholine biosynthetic process"/>
    <property type="evidence" value="ECO:0007669"/>
    <property type="project" value="Ensembl"/>
</dbReference>
<dbReference type="GO" id="GO:1904377">
    <property type="term" value="P:positive regulation of protein localization to cell periphery"/>
    <property type="evidence" value="ECO:0007669"/>
    <property type="project" value="Ensembl"/>
</dbReference>
<dbReference type="GO" id="GO:0072657">
    <property type="term" value="P:protein localization to membrane"/>
    <property type="evidence" value="ECO:0007669"/>
    <property type="project" value="Ensembl"/>
</dbReference>
<dbReference type="GO" id="GO:0015031">
    <property type="term" value="P:protein transport"/>
    <property type="evidence" value="ECO:0007669"/>
    <property type="project" value="UniProtKB-KW"/>
</dbReference>
<dbReference type="GO" id="GO:0016192">
    <property type="term" value="P:vesicle-mediated transport"/>
    <property type="evidence" value="ECO:0007669"/>
    <property type="project" value="InterPro"/>
</dbReference>
<dbReference type="CDD" id="cd04107">
    <property type="entry name" value="Rab32_Rab38"/>
    <property type="match status" value="1"/>
</dbReference>
<dbReference type="FunFam" id="3.40.50.300:FF:000222">
    <property type="entry name" value="RAB32, member RAS oncogene family"/>
    <property type="match status" value="1"/>
</dbReference>
<dbReference type="Gene3D" id="3.40.50.300">
    <property type="entry name" value="P-loop containing nucleotide triphosphate hydrolases"/>
    <property type="match status" value="1"/>
</dbReference>
<dbReference type="InterPro" id="IPR027417">
    <property type="entry name" value="P-loop_NTPase"/>
</dbReference>
<dbReference type="InterPro" id="IPR030697">
    <property type="entry name" value="Rab29/Rab38/Rab32"/>
</dbReference>
<dbReference type="InterPro" id="IPR005225">
    <property type="entry name" value="Small_GTP-bd"/>
</dbReference>
<dbReference type="InterPro" id="IPR001806">
    <property type="entry name" value="Small_GTPase"/>
</dbReference>
<dbReference type="NCBIfam" id="TIGR00231">
    <property type="entry name" value="small_GTP"/>
    <property type="match status" value="1"/>
</dbReference>
<dbReference type="PANTHER" id="PTHR47981">
    <property type="entry name" value="RAB FAMILY"/>
    <property type="match status" value="1"/>
</dbReference>
<dbReference type="PANTHER" id="PTHR47981:SF43">
    <property type="entry name" value="RAS-RELATED PROTEIN RAB"/>
    <property type="match status" value="1"/>
</dbReference>
<dbReference type="Pfam" id="PF00071">
    <property type="entry name" value="Ras"/>
    <property type="match status" value="1"/>
</dbReference>
<dbReference type="PRINTS" id="PR00449">
    <property type="entry name" value="RASTRNSFRMNG"/>
</dbReference>
<dbReference type="SMART" id="SM00175">
    <property type="entry name" value="RAB"/>
    <property type="match status" value="1"/>
</dbReference>
<dbReference type="SMART" id="SM00176">
    <property type="entry name" value="RAN"/>
    <property type="match status" value="1"/>
</dbReference>
<dbReference type="SMART" id="SM00173">
    <property type="entry name" value="RAS"/>
    <property type="match status" value="1"/>
</dbReference>
<dbReference type="SMART" id="SM00174">
    <property type="entry name" value="RHO"/>
    <property type="match status" value="1"/>
</dbReference>
<dbReference type="SUPFAM" id="SSF52540">
    <property type="entry name" value="P-loop containing nucleoside triphosphate hydrolases"/>
    <property type="match status" value="1"/>
</dbReference>
<dbReference type="PROSITE" id="PS51419">
    <property type="entry name" value="RAB"/>
    <property type="match status" value="1"/>
</dbReference>
<reference key="1">
    <citation type="journal article" date="2002" name="Proc. Natl. Acad. Sci. U.S.A.">
        <title>Mutation of melanosome protein RAB38 in chocolate mice.</title>
        <authorList>
            <person name="Loftus S.K."/>
            <person name="Larson D.M."/>
            <person name="Baxter L.L."/>
            <person name="Antonellis A."/>
            <person name="Chen Y."/>
            <person name="Wu X."/>
            <person name="Jiang Y."/>
            <person name="Bittner M."/>
            <person name="Hammer J.A. III"/>
            <person name="Pavan W.J."/>
        </authorList>
    </citation>
    <scope>NUCLEOTIDE SEQUENCE [GENOMIC DNA / MRNA]</scope>
    <scope>VARIANT CHT VAL-19</scope>
    <source>
        <strain>C57BL/6J</strain>
    </source>
</reference>
<reference key="2">
    <citation type="journal article" date="2005" name="Science">
        <title>The transcriptional landscape of the mammalian genome.</title>
        <authorList>
            <person name="Carninci P."/>
            <person name="Kasukawa T."/>
            <person name="Katayama S."/>
            <person name="Gough J."/>
            <person name="Frith M.C."/>
            <person name="Maeda N."/>
            <person name="Oyama R."/>
            <person name="Ravasi T."/>
            <person name="Lenhard B."/>
            <person name="Wells C."/>
            <person name="Kodzius R."/>
            <person name="Shimokawa K."/>
            <person name="Bajic V.B."/>
            <person name="Brenner S.E."/>
            <person name="Batalov S."/>
            <person name="Forrest A.R."/>
            <person name="Zavolan M."/>
            <person name="Davis M.J."/>
            <person name="Wilming L.G."/>
            <person name="Aidinis V."/>
            <person name="Allen J.E."/>
            <person name="Ambesi-Impiombato A."/>
            <person name="Apweiler R."/>
            <person name="Aturaliya R.N."/>
            <person name="Bailey T.L."/>
            <person name="Bansal M."/>
            <person name="Baxter L."/>
            <person name="Beisel K.W."/>
            <person name="Bersano T."/>
            <person name="Bono H."/>
            <person name="Chalk A.M."/>
            <person name="Chiu K.P."/>
            <person name="Choudhary V."/>
            <person name="Christoffels A."/>
            <person name="Clutterbuck D.R."/>
            <person name="Crowe M.L."/>
            <person name="Dalla E."/>
            <person name="Dalrymple B.P."/>
            <person name="de Bono B."/>
            <person name="Della Gatta G."/>
            <person name="di Bernardo D."/>
            <person name="Down T."/>
            <person name="Engstrom P."/>
            <person name="Fagiolini M."/>
            <person name="Faulkner G."/>
            <person name="Fletcher C.F."/>
            <person name="Fukushima T."/>
            <person name="Furuno M."/>
            <person name="Futaki S."/>
            <person name="Gariboldi M."/>
            <person name="Georgii-Hemming P."/>
            <person name="Gingeras T.R."/>
            <person name="Gojobori T."/>
            <person name="Green R.E."/>
            <person name="Gustincich S."/>
            <person name="Harbers M."/>
            <person name="Hayashi Y."/>
            <person name="Hensch T.K."/>
            <person name="Hirokawa N."/>
            <person name="Hill D."/>
            <person name="Huminiecki L."/>
            <person name="Iacono M."/>
            <person name="Ikeo K."/>
            <person name="Iwama A."/>
            <person name="Ishikawa T."/>
            <person name="Jakt M."/>
            <person name="Kanapin A."/>
            <person name="Katoh M."/>
            <person name="Kawasawa Y."/>
            <person name="Kelso J."/>
            <person name="Kitamura H."/>
            <person name="Kitano H."/>
            <person name="Kollias G."/>
            <person name="Krishnan S.P."/>
            <person name="Kruger A."/>
            <person name="Kummerfeld S.K."/>
            <person name="Kurochkin I.V."/>
            <person name="Lareau L.F."/>
            <person name="Lazarevic D."/>
            <person name="Lipovich L."/>
            <person name="Liu J."/>
            <person name="Liuni S."/>
            <person name="McWilliam S."/>
            <person name="Madan Babu M."/>
            <person name="Madera M."/>
            <person name="Marchionni L."/>
            <person name="Matsuda H."/>
            <person name="Matsuzawa S."/>
            <person name="Miki H."/>
            <person name="Mignone F."/>
            <person name="Miyake S."/>
            <person name="Morris K."/>
            <person name="Mottagui-Tabar S."/>
            <person name="Mulder N."/>
            <person name="Nakano N."/>
            <person name="Nakauchi H."/>
            <person name="Ng P."/>
            <person name="Nilsson R."/>
            <person name="Nishiguchi S."/>
            <person name="Nishikawa S."/>
            <person name="Nori F."/>
            <person name="Ohara O."/>
            <person name="Okazaki Y."/>
            <person name="Orlando V."/>
            <person name="Pang K.C."/>
            <person name="Pavan W.J."/>
            <person name="Pavesi G."/>
            <person name="Pesole G."/>
            <person name="Petrovsky N."/>
            <person name="Piazza S."/>
            <person name="Reed J."/>
            <person name="Reid J.F."/>
            <person name="Ring B.Z."/>
            <person name="Ringwald M."/>
            <person name="Rost B."/>
            <person name="Ruan Y."/>
            <person name="Salzberg S.L."/>
            <person name="Sandelin A."/>
            <person name="Schneider C."/>
            <person name="Schoenbach C."/>
            <person name="Sekiguchi K."/>
            <person name="Semple C.A."/>
            <person name="Seno S."/>
            <person name="Sessa L."/>
            <person name="Sheng Y."/>
            <person name="Shibata Y."/>
            <person name="Shimada H."/>
            <person name="Shimada K."/>
            <person name="Silva D."/>
            <person name="Sinclair B."/>
            <person name="Sperling S."/>
            <person name="Stupka E."/>
            <person name="Sugiura K."/>
            <person name="Sultana R."/>
            <person name="Takenaka Y."/>
            <person name="Taki K."/>
            <person name="Tammoja K."/>
            <person name="Tan S.L."/>
            <person name="Tang S."/>
            <person name="Taylor M.S."/>
            <person name="Tegner J."/>
            <person name="Teichmann S.A."/>
            <person name="Ueda H.R."/>
            <person name="van Nimwegen E."/>
            <person name="Verardo R."/>
            <person name="Wei C.L."/>
            <person name="Yagi K."/>
            <person name="Yamanishi H."/>
            <person name="Zabarovsky E."/>
            <person name="Zhu S."/>
            <person name="Zimmer A."/>
            <person name="Hide W."/>
            <person name="Bult C."/>
            <person name="Grimmond S.M."/>
            <person name="Teasdale R.D."/>
            <person name="Liu E.T."/>
            <person name="Brusic V."/>
            <person name="Quackenbush J."/>
            <person name="Wahlestedt C."/>
            <person name="Mattick J.S."/>
            <person name="Hume D.A."/>
            <person name="Kai C."/>
            <person name="Sasaki D."/>
            <person name="Tomaru Y."/>
            <person name="Fukuda S."/>
            <person name="Kanamori-Katayama M."/>
            <person name="Suzuki M."/>
            <person name="Aoki J."/>
            <person name="Arakawa T."/>
            <person name="Iida J."/>
            <person name="Imamura K."/>
            <person name="Itoh M."/>
            <person name="Kato T."/>
            <person name="Kawaji H."/>
            <person name="Kawagashira N."/>
            <person name="Kawashima T."/>
            <person name="Kojima M."/>
            <person name="Kondo S."/>
            <person name="Konno H."/>
            <person name="Nakano K."/>
            <person name="Ninomiya N."/>
            <person name="Nishio T."/>
            <person name="Okada M."/>
            <person name="Plessy C."/>
            <person name="Shibata K."/>
            <person name="Shiraki T."/>
            <person name="Suzuki S."/>
            <person name="Tagami M."/>
            <person name="Waki K."/>
            <person name="Watahiki A."/>
            <person name="Okamura-Oho Y."/>
            <person name="Suzuki H."/>
            <person name="Kawai J."/>
            <person name="Hayashizaki Y."/>
        </authorList>
    </citation>
    <scope>NUCLEOTIDE SEQUENCE [LARGE SCALE MRNA]</scope>
    <source>
        <strain>C57BL/6J</strain>
        <tissue>Ovary</tissue>
        <tissue>Retina</tissue>
        <tissue>Tongue</tissue>
    </source>
</reference>
<reference key="3">
    <citation type="journal article" date="2011" name="J. Biol. Chem.">
        <title>Structure-function analysis of VPS9-ankyrin-repeat protein (Varp) in the trafficking of tyrosinase-related protein 1 in melanocytes.</title>
        <authorList>
            <person name="Tamura K."/>
            <person name="Ohbayashi N."/>
            <person name="Ishibashi K."/>
            <person name="Fukuda M."/>
        </authorList>
    </citation>
    <scope>FUNCTION</scope>
    <scope>INTERACTION WITH ANKRD27</scope>
    <scope>MUTAGENESIS OF VAL-78</scope>
</reference>
<reference key="4">
    <citation type="journal article" date="2016" name="J. Biol. Chem.">
        <title>RUTBC1 functions as a GTPase-activating protein for Rab32/38 and regulates melanogenic enzyme trafficking in melanocytes.</title>
        <authorList>
            <person name="Marubashi S."/>
            <person name="Shimada H."/>
            <person name="Fukuda M."/>
            <person name="Ohbayashi N."/>
        </authorList>
    </citation>
    <scope>FUNCTION</scope>
    <scope>ACTIVITY REGULATION</scope>
    <scope>SUBCELLULAR LOCATION</scope>
    <scope>MUTAGENESIS OF GLN-69</scope>
</reference>
<feature type="chain" id="PRO_0000121252" description="Ras-related protein Rab-38">
    <location>
        <begin position="1"/>
        <end position="211"/>
    </location>
</feature>
<feature type="short sequence motif" description="Switch 1" evidence="3">
    <location>
        <begin position="32"/>
        <end position="46"/>
    </location>
</feature>
<feature type="short sequence motif" description="Switch 2" evidence="3">
    <location>
        <begin position="68"/>
        <end position="81"/>
    </location>
</feature>
<feature type="binding site" evidence="2">
    <location>
        <position position="19"/>
    </location>
    <ligand>
        <name>GTP</name>
        <dbReference type="ChEBI" id="CHEBI:37565"/>
    </ligand>
</feature>
<feature type="binding site" evidence="2">
    <location>
        <position position="20"/>
    </location>
    <ligand>
        <name>GTP</name>
        <dbReference type="ChEBI" id="CHEBI:37565"/>
    </ligand>
</feature>
<feature type="binding site" evidence="2">
    <location>
        <position position="21"/>
    </location>
    <ligand>
        <name>GTP</name>
        <dbReference type="ChEBI" id="CHEBI:37565"/>
    </ligand>
</feature>
<feature type="binding site" evidence="2">
    <location>
        <position position="22"/>
    </location>
    <ligand>
        <name>GTP</name>
        <dbReference type="ChEBI" id="CHEBI:37565"/>
    </ligand>
</feature>
<feature type="binding site" evidence="2">
    <location>
        <position position="23"/>
    </location>
    <ligand>
        <name>GTP</name>
        <dbReference type="ChEBI" id="CHEBI:37565"/>
    </ligand>
</feature>
<feature type="binding site" evidence="2">
    <location>
        <position position="23"/>
    </location>
    <ligand>
        <name>Mg(2+)</name>
        <dbReference type="ChEBI" id="CHEBI:18420"/>
    </ligand>
</feature>
<feature type="binding site" evidence="2">
    <location>
        <position position="24"/>
    </location>
    <ligand>
        <name>GTP</name>
        <dbReference type="ChEBI" id="CHEBI:37565"/>
    </ligand>
</feature>
<feature type="binding site" evidence="2">
    <location>
        <position position="35"/>
    </location>
    <ligand>
        <name>GTP</name>
        <dbReference type="ChEBI" id="CHEBI:37565"/>
    </ligand>
</feature>
<feature type="binding site" evidence="2">
    <location>
        <position position="36"/>
    </location>
    <ligand>
        <name>GTP</name>
        <dbReference type="ChEBI" id="CHEBI:37565"/>
    </ligand>
</feature>
<feature type="binding site" evidence="2">
    <location>
        <position position="38"/>
    </location>
    <ligand>
        <name>GTP</name>
        <dbReference type="ChEBI" id="CHEBI:37565"/>
    </ligand>
</feature>
<feature type="binding site" evidence="2">
    <location>
        <position position="41"/>
    </location>
    <ligand>
        <name>GTP</name>
        <dbReference type="ChEBI" id="CHEBI:37565"/>
    </ligand>
</feature>
<feature type="binding site" evidence="2">
    <location>
        <position position="41"/>
    </location>
    <ligand>
        <name>Mg(2+)</name>
        <dbReference type="ChEBI" id="CHEBI:18420"/>
    </ligand>
</feature>
<feature type="binding site" evidence="2">
    <location>
        <position position="65"/>
    </location>
    <ligand>
        <name>Mg(2+)</name>
        <dbReference type="ChEBI" id="CHEBI:18420"/>
    </ligand>
</feature>
<feature type="binding site" evidence="2">
    <location>
        <position position="68"/>
    </location>
    <ligand>
        <name>GTP</name>
        <dbReference type="ChEBI" id="CHEBI:37565"/>
    </ligand>
</feature>
<feature type="binding site" evidence="2">
    <location>
        <position position="128"/>
    </location>
    <ligand>
        <name>GTP</name>
        <dbReference type="ChEBI" id="CHEBI:37565"/>
    </ligand>
</feature>
<feature type="binding site" evidence="2">
    <location>
        <position position="130"/>
    </location>
    <ligand>
        <name>GTP</name>
        <dbReference type="ChEBI" id="CHEBI:37565"/>
    </ligand>
</feature>
<feature type="binding site" evidence="2">
    <location>
        <position position="160"/>
    </location>
    <ligand>
        <name>GTP</name>
        <dbReference type="ChEBI" id="CHEBI:37565"/>
    </ligand>
</feature>
<feature type="binding site" evidence="2">
    <location>
        <position position="161"/>
    </location>
    <ligand>
        <name>GTP</name>
        <dbReference type="ChEBI" id="CHEBI:37565"/>
    </ligand>
</feature>
<feature type="lipid moiety-binding region" description="S-palmitoyl cysteine" evidence="4">
    <location>
        <position position="205"/>
    </location>
</feature>
<feature type="lipid moiety-binding region" description="S-geranylgeranyl cysteine" evidence="1">
    <location>
        <position position="208"/>
    </location>
</feature>
<feature type="sequence variant" description="In cht." evidence="5">
    <original>G</original>
    <variation>V</variation>
    <location>
        <position position="19"/>
    </location>
</feature>
<feature type="mutagenesis site" description="Inhibits the proper trafficking of melanogenic enzymes TYR, TYRP1 and DCT/TYRP2 to melanosomes in melanocytes." evidence="7">
    <original>Q</original>
    <variation>L</variation>
    <location>
        <position position="69"/>
    </location>
</feature>
<feature type="mutagenesis site" description="Disrupts interaction with ANKRD27; inhibits peripheral distribution of TYRP1 in melanocytes." evidence="6">
    <original>V</original>
    <variation>A</variation>
    <location>
        <position position="78"/>
    </location>
</feature>
<feature type="sequence conflict" description="In Ref. 2; BAB26198." evidence="8" ref="2">
    <original>EH</original>
    <variation>DD</variation>
    <location>
        <begin position="149"/>
        <end position="150"/>
    </location>
</feature>
<feature type="sequence conflict" description="In Ref. 2; BAB26198." evidence="8" ref="2">
    <original>KE</original>
    <variation>QR</variation>
    <location>
        <begin position="161"/>
        <end position="162"/>
    </location>
</feature>
<feature type="sequence conflict" description="In Ref. 2; BAB26198." evidence="8" ref="2">
    <original>LVK</original>
    <variation>RGQ</variation>
    <location>
        <begin position="173"/>
        <end position="175"/>
    </location>
</feature>
<protein>
    <recommendedName>
        <fullName>Ras-related protein Rab-38</fullName>
        <ecNumber evidence="3">3.6.5.2</ecNumber>
    </recommendedName>
</protein>
<proteinExistence type="evidence at protein level"/>
<accession>Q8QZZ8</accession>
<accession>Q9D7E8</accession>
<sequence length="211" mass="23776">MQTPHKEHLYKLLVIGDLGVGKTSIIKRYVHQNFSSHYRATIGVDFALKVLHWDPETVVRLQLWDIAGQERFGNMTRVYYREAMGAFIVFDVTRPATFEAVAKWKNDLDSKLTLPNGKPVSVVLLANKCDQGKDVLMNNGLKMDQFCKEHGFVGWFETSAKENINIDEASRCLVKHILANECDLLESIEPDIVKPHLTSPKVVSCSGCAKS</sequence>
<comment type="function">
    <text evidence="2 3 6 7">The small GTPases Rab are key regulators of intracellular membrane trafficking, from the formation of transport vesicles to their fusion with membranes. Rabs cycle between an inactive GDP-bound form and an active GTP-bound form that is able to recruit to membranes different sets of downstream effectors directly responsible for vesicle formation, movement, tethering and fusion (By similarity). RAB38 plays a role in the maturation of phagosomes that engulf pathogens, such as S.aureus and Mycobacterium (By similarity). May be involved in melanosomal transport and docking. Involved in the proper sorting of TYRP1. Involved in peripheral melanosomal distribution of TYRP1 in melanocytes; the function, which probably is implicating vesicle-trafficking, includes cooperation with ANKRD27 and VAMP7 (PubMed:21187289). Plays an important role in the control of melanin production and melanosome biogenesis (By similarity). In concert with RAB32, regulates the proper trafficking of melanogenic enzymes TYR, TYRP1 and DCT/TYRP2 to melanosomes in melanocytes (PubMed:26620560).</text>
</comment>
<comment type="catalytic activity">
    <reaction evidence="3">
        <text>GTP + H2O = GDP + phosphate + H(+)</text>
        <dbReference type="Rhea" id="RHEA:19669"/>
        <dbReference type="ChEBI" id="CHEBI:15377"/>
        <dbReference type="ChEBI" id="CHEBI:15378"/>
        <dbReference type="ChEBI" id="CHEBI:37565"/>
        <dbReference type="ChEBI" id="CHEBI:43474"/>
        <dbReference type="ChEBI" id="CHEBI:58189"/>
        <dbReference type="EC" id="3.6.5.2"/>
    </reaction>
    <physiologicalReaction direction="left-to-right" evidence="3">
        <dbReference type="Rhea" id="RHEA:19670"/>
    </physiologicalReaction>
</comment>
<comment type="cofactor">
    <cofactor evidence="2">
        <name>Mg(2+)</name>
        <dbReference type="ChEBI" id="CHEBI:18420"/>
    </cofactor>
</comment>
<comment type="activity regulation">
    <text evidence="7 8">Regulated by guanine nucleotide exchange factors (GEFs) including the BLOC-3 complex composed of HPS1 and HPS4 which promote the exchange of bound GDP for free GTP. Regulated by GTPase activating proteins (GAPs) including SGSM2 which increase the GTP hydrolysis activity (PubMed:26620560). Inhibited by GDP dissociation inhibitors (GDIs) (Probable).</text>
</comment>
<comment type="subunit">
    <text evidence="2">Interacts with ANKRD27 (By similarity).</text>
</comment>
<comment type="interaction">
    <interactant intactId="EBI-1993463">
        <id>Q8QZZ8</id>
    </interactant>
    <interactant intactId="EBI-1993429">
        <id>Q3UMR0</id>
        <label>Ankrd27</label>
    </interactant>
    <organismsDiffer>false</organismsDiffer>
    <experiments>5</experiments>
</comment>
<comment type="subcellular location">
    <subcellularLocation>
        <location evidence="8">Cell membrane</location>
        <topology evidence="8">Lipid-anchor</topology>
        <orientation evidence="8">Cytoplasmic side</orientation>
    </subcellularLocation>
    <subcellularLocation>
        <location evidence="2">Cytoplasmic vesicle</location>
        <location evidence="2">Phagosome</location>
    </subcellularLocation>
    <subcellularLocation>
        <location evidence="8">Cytoplasmic vesicle</location>
        <location evidence="8">Phagosome membrane</location>
        <topology evidence="8">Lipid-anchor</topology>
        <orientation evidence="8">Cytoplasmic side</orientation>
    </subcellularLocation>
    <subcellularLocation>
        <location evidence="7">Melanosome</location>
    </subcellularLocation>
    <subcellularLocation>
        <location evidence="2">Melanosome membrane</location>
    </subcellularLocation>
    <text evidence="2">Recruited to phagosomes containing S.aureus or M.tuberculosis. The BLOC-3 complex, a heterodimer of HPS1 and HPS4 promotes its membrane localization.</text>
</comment>
<comment type="domain">
    <text evidence="3">Switch 1, switch 2 and the interswitch regions are characteristic of Rab GTPases and mediate the interactions with Rab downstream effectors. The switch regions undergo conformational changes upon nucleotide binding which drive interaction with specific sets of effector proteins, with most effectors only binding to GTP-bound Rab.</text>
</comment>
<comment type="disease">
    <text evidence="5">Defects in Rab38 are the cause of a form of oculocutaneous albinism known as the chocolate (cht) phenotype. Mice exhibit a brown coat similar in color to mice with a mutation in tyrosinase-related protein 1 (TYRP1). The targeting of TYRP1 protein to the melanosome is impaired in Rab38(cht)/Rab38(cht) melanocytes.</text>
</comment>
<comment type="similarity">
    <text evidence="8">Belongs to the small GTPase superfamily. Rab family.</text>
</comment>
<name>RAB38_MOUSE</name>
<keyword id="KW-0015">Albinism</keyword>
<keyword id="KW-1003">Cell membrane</keyword>
<keyword id="KW-0968">Cytoplasmic vesicle</keyword>
<keyword id="KW-0225">Disease variant</keyword>
<keyword id="KW-0342">GTP-binding</keyword>
<keyword id="KW-0378">Hydrolase</keyword>
<keyword id="KW-0449">Lipoprotein</keyword>
<keyword id="KW-0460">Magnesium</keyword>
<keyword id="KW-0472">Membrane</keyword>
<keyword id="KW-0479">Metal-binding</keyword>
<keyword id="KW-0547">Nucleotide-binding</keyword>
<keyword id="KW-0564">Palmitate</keyword>
<keyword id="KW-0636">Prenylation</keyword>
<keyword id="KW-0653">Protein transport</keyword>
<keyword id="KW-1185">Reference proteome</keyword>
<keyword id="KW-0813">Transport</keyword>
<organism>
    <name type="scientific">Mus musculus</name>
    <name type="common">Mouse</name>
    <dbReference type="NCBI Taxonomy" id="10090"/>
    <lineage>
        <taxon>Eukaryota</taxon>
        <taxon>Metazoa</taxon>
        <taxon>Chordata</taxon>
        <taxon>Craniata</taxon>
        <taxon>Vertebrata</taxon>
        <taxon>Euteleostomi</taxon>
        <taxon>Mammalia</taxon>
        <taxon>Eutheria</taxon>
        <taxon>Euarchontoglires</taxon>
        <taxon>Glires</taxon>
        <taxon>Rodentia</taxon>
        <taxon>Myomorpha</taxon>
        <taxon>Muroidea</taxon>
        <taxon>Muridae</taxon>
        <taxon>Murinae</taxon>
        <taxon>Mus</taxon>
        <taxon>Mus</taxon>
    </lineage>
</organism>
<gene>
    <name evidence="9" type="primary">Rab38</name>
</gene>
<evidence type="ECO:0000250" key="1"/>
<evidence type="ECO:0000250" key="2">
    <source>
        <dbReference type="UniProtKB" id="P57729"/>
    </source>
</evidence>
<evidence type="ECO:0000250" key="3">
    <source>
        <dbReference type="UniProtKB" id="Q13637"/>
    </source>
</evidence>
<evidence type="ECO:0000255" key="4"/>
<evidence type="ECO:0000269" key="5">
    <source>
    </source>
</evidence>
<evidence type="ECO:0000269" key="6">
    <source>
    </source>
</evidence>
<evidence type="ECO:0000269" key="7">
    <source>
    </source>
</evidence>
<evidence type="ECO:0000305" key="8"/>
<evidence type="ECO:0000312" key="9">
    <source>
        <dbReference type="MGI" id="MGI:1919683"/>
    </source>
</evidence>